<gene>
    <name evidence="5" type="primary">Lrrc51</name>
</gene>
<reference key="1">
    <citation type="journal article" date="2008" name="Nat. Genet.">
        <title>Mutations of LRTOMT, a fusion gene with alternative reading frames, cause nonsyndromic deafness in humans.</title>
        <authorList>
            <person name="Ahmed Z.M."/>
            <person name="Masmoudi S."/>
            <person name="Kalay E."/>
            <person name="Belyantseva I.A."/>
            <person name="Mosrati M.A."/>
            <person name="Collin R.W.J."/>
            <person name="Riazuddin S."/>
            <person name="Hmani-Aifa M."/>
            <person name="Venselaar H."/>
            <person name="Kawar M.N."/>
            <person name="Tlili A."/>
            <person name="van der Zwaag B."/>
            <person name="Khan S.Y."/>
            <person name="Ayadi L."/>
            <person name="Riazuddin S.A."/>
            <person name="Morell R.J."/>
            <person name="Griffith A.J."/>
            <person name="Charfedine I."/>
            <person name="Caylan R."/>
            <person name="Oostrik J."/>
            <person name="Karaguzel A."/>
            <person name="Ghorbel A."/>
            <person name="Riazuddin S."/>
            <person name="Friedman T.B."/>
            <person name="Ayadi H."/>
            <person name="Kremer H."/>
        </authorList>
    </citation>
    <scope>NUCLEOTIDE SEQUENCE [MRNA] (ISOFORMS 1 AND 2)</scope>
    <scope>SUBCELLULAR LOCATION</scope>
    <scope>TISSUE SPECIFICITY</scope>
    <source>
        <strain>C57BL/6J</strain>
        <tissue>Brain</tissue>
    </source>
</reference>
<reference key="2">
    <citation type="journal article" date="2005" name="Science">
        <title>The transcriptional landscape of the mammalian genome.</title>
        <authorList>
            <person name="Carninci P."/>
            <person name="Kasukawa T."/>
            <person name="Katayama S."/>
            <person name="Gough J."/>
            <person name="Frith M.C."/>
            <person name="Maeda N."/>
            <person name="Oyama R."/>
            <person name="Ravasi T."/>
            <person name="Lenhard B."/>
            <person name="Wells C."/>
            <person name="Kodzius R."/>
            <person name="Shimokawa K."/>
            <person name="Bajic V.B."/>
            <person name="Brenner S.E."/>
            <person name="Batalov S."/>
            <person name="Forrest A.R."/>
            <person name="Zavolan M."/>
            <person name="Davis M.J."/>
            <person name="Wilming L.G."/>
            <person name="Aidinis V."/>
            <person name="Allen J.E."/>
            <person name="Ambesi-Impiombato A."/>
            <person name="Apweiler R."/>
            <person name="Aturaliya R.N."/>
            <person name="Bailey T.L."/>
            <person name="Bansal M."/>
            <person name="Baxter L."/>
            <person name="Beisel K.W."/>
            <person name="Bersano T."/>
            <person name="Bono H."/>
            <person name="Chalk A.M."/>
            <person name="Chiu K.P."/>
            <person name="Choudhary V."/>
            <person name="Christoffels A."/>
            <person name="Clutterbuck D.R."/>
            <person name="Crowe M.L."/>
            <person name="Dalla E."/>
            <person name="Dalrymple B.P."/>
            <person name="de Bono B."/>
            <person name="Della Gatta G."/>
            <person name="di Bernardo D."/>
            <person name="Down T."/>
            <person name="Engstrom P."/>
            <person name="Fagiolini M."/>
            <person name="Faulkner G."/>
            <person name="Fletcher C.F."/>
            <person name="Fukushima T."/>
            <person name="Furuno M."/>
            <person name="Futaki S."/>
            <person name="Gariboldi M."/>
            <person name="Georgii-Hemming P."/>
            <person name="Gingeras T.R."/>
            <person name="Gojobori T."/>
            <person name="Green R.E."/>
            <person name="Gustincich S."/>
            <person name="Harbers M."/>
            <person name="Hayashi Y."/>
            <person name="Hensch T.K."/>
            <person name="Hirokawa N."/>
            <person name="Hill D."/>
            <person name="Huminiecki L."/>
            <person name="Iacono M."/>
            <person name="Ikeo K."/>
            <person name="Iwama A."/>
            <person name="Ishikawa T."/>
            <person name="Jakt M."/>
            <person name="Kanapin A."/>
            <person name="Katoh M."/>
            <person name="Kawasawa Y."/>
            <person name="Kelso J."/>
            <person name="Kitamura H."/>
            <person name="Kitano H."/>
            <person name="Kollias G."/>
            <person name="Krishnan S.P."/>
            <person name="Kruger A."/>
            <person name="Kummerfeld S.K."/>
            <person name="Kurochkin I.V."/>
            <person name="Lareau L.F."/>
            <person name="Lazarevic D."/>
            <person name="Lipovich L."/>
            <person name="Liu J."/>
            <person name="Liuni S."/>
            <person name="McWilliam S."/>
            <person name="Madan Babu M."/>
            <person name="Madera M."/>
            <person name="Marchionni L."/>
            <person name="Matsuda H."/>
            <person name="Matsuzawa S."/>
            <person name="Miki H."/>
            <person name="Mignone F."/>
            <person name="Miyake S."/>
            <person name="Morris K."/>
            <person name="Mottagui-Tabar S."/>
            <person name="Mulder N."/>
            <person name="Nakano N."/>
            <person name="Nakauchi H."/>
            <person name="Ng P."/>
            <person name="Nilsson R."/>
            <person name="Nishiguchi S."/>
            <person name="Nishikawa S."/>
            <person name="Nori F."/>
            <person name="Ohara O."/>
            <person name="Okazaki Y."/>
            <person name="Orlando V."/>
            <person name="Pang K.C."/>
            <person name="Pavan W.J."/>
            <person name="Pavesi G."/>
            <person name="Pesole G."/>
            <person name="Petrovsky N."/>
            <person name="Piazza S."/>
            <person name="Reed J."/>
            <person name="Reid J.F."/>
            <person name="Ring B.Z."/>
            <person name="Ringwald M."/>
            <person name="Rost B."/>
            <person name="Ruan Y."/>
            <person name="Salzberg S.L."/>
            <person name="Sandelin A."/>
            <person name="Schneider C."/>
            <person name="Schoenbach C."/>
            <person name="Sekiguchi K."/>
            <person name="Semple C.A."/>
            <person name="Seno S."/>
            <person name="Sessa L."/>
            <person name="Sheng Y."/>
            <person name="Shibata Y."/>
            <person name="Shimada H."/>
            <person name="Shimada K."/>
            <person name="Silva D."/>
            <person name="Sinclair B."/>
            <person name="Sperling S."/>
            <person name="Stupka E."/>
            <person name="Sugiura K."/>
            <person name="Sultana R."/>
            <person name="Takenaka Y."/>
            <person name="Taki K."/>
            <person name="Tammoja K."/>
            <person name="Tan S.L."/>
            <person name="Tang S."/>
            <person name="Taylor M.S."/>
            <person name="Tegner J."/>
            <person name="Teichmann S.A."/>
            <person name="Ueda H.R."/>
            <person name="van Nimwegen E."/>
            <person name="Verardo R."/>
            <person name="Wei C.L."/>
            <person name="Yagi K."/>
            <person name="Yamanishi H."/>
            <person name="Zabarovsky E."/>
            <person name="Zhu S."/>
            <person name="Zimmer A."/>
            <person name="Hide W."/>
            <person name="Bult C."/>
            <person name="Grimmond S.M."/>
            <person name="Teasdale R.D."/>
            <person name="Liu E.T."/>
            <person name="Brusic V."/>
            <person name="Quackenbush J."/>
            <person name="Wahlestedt C."/>
            <person name="Mattick J.S."/>
            <person name="Hume D.A."/>
            <person name="Kai C."/>
            <person name="Sasaki D."/>
            <person name="Tomaru Y."/>
            <person name="Fukuda S."/>
            <person name="Kanamori-Katayama M."/>
            <person name="Suzuki M."/>
            <person name="Aoki J."/>
            <person name="Arakawa T."/>
            <person name="Iida J."/>
            <person name="Imamura K."/>
            <person name="Itoh M."/>
            <person name="Kato T."/>
            <person name="Kawaji H."/>
            <person name="Kawagashira N."/>
            <person name="Kawashima T."/>
            <person name="Kojima M."/>
            <person name="Kondo S."/>
            <person name="Konno H."/>
            <person name="Nakano K."/>
            <person name="Ninomiya N."/>
            <person name="Nishio T."/>
            <person name="Okada M."/>
            <person name="Plessy C."/>
            <person name="Shibata K."/>
            <person name="Shiraki T."/>
            <person name="Suzuki S."/>
            <person name="Tagami M."/>
            <person name="Waki K."/>
            <person name="Watahiki A."/>
            <person name="Okamura-Oho Y."/>
            <person name="Suzuki H."/>
            <person name="Kawai J."/>
            <person name="Hayashizaki Y."/>
        </authorList>
    </citation>
    <scope>NUCLEOTIDE SEQUENCE [LARGE SCALE MRNA] (ISOFORM 1)</scope>
    <source>
        <strain>C57BL/6J</strain>
        <tissue>Testis</tissue>
    </source>
</reference>
<reference key="3">
    <citation type="submission" date="2005-07" db="EMBL/GenBank/DDBJ databases">
        <authorList>
            <person name="Mural R.J."/>
            <person name="Adams M.D."/>
            <person name="Myers E.W."/>
            <person name="Smith H.O."/>
            <person name="Venter J.C."/>
        </authorList>
    </citation>
    <scope>NUCLEOTIDE SEQUENCE [LARGE SCALE GENOMIC DNA]</scope>
</reference>
<reference key="4">
    <citation type="journal article" date="2004" name="Genome Res.">
        <title>The status, quality, and expansion of the NIH full-length cDNA project: the Mammalian Gene Collection (MGC).</title>
        <authorList>
            <consortium name="The MGC Project Team"/>
        </authorList>
    </citation>
    <scope>NUCLEOTIDE SEQUENCE [LARGE SCALE MRNA] (ISOFORM 2)</scope>
    <source>
        <strain>FVB/N</strain>
        <tissue>Colon</tissue>
    </source>
</reference>
<name>LRC51_MOUSE</name>
<sequence length="192" mass="22008">MSSRDYMNTSVQEPPLDYSFKSVQMVQDLVTEEPRTGLRPVRHSKSGKSLTQSLWLNNNVLNDLKDFNQVVSQLLQHPENLAWIDLSFNDLTTIDPVLTTFFNLSVLYLHGNGIHRLGEVNKLAVLPRLRSLTLHGNPIEEEKGYRQYVLCNLPRITTFDFSGVTRADRSTAEVWKRMGIKPKKVRAKQDVL</sequence>
<organism>
    <name type="scientific">Mus musculus</name>
    <name type="common">Mouse</name>
    <dbReference type="NCBI Taxonomy" id="10090"/>
    <lineage>
        <taxon>Eukaryota</taxon>
        <taxon>Metazoa</taxon>
        <taxon>Chordata</taxon>
        <taxon>Craniata</taxon>
        <taxon>Vertebrata</taxon>
        <taxon>Euteleostomi</taxon>
        <taxon>Mammalia</taxon>
        <taxon>Eutheria</taxon>
        <taxon>Euarchontoglires</taxon>
        <taxon>Glires</taxon>
        <taxon>Rodentia</taxon>
        <taxon>Myomorpha</taxon>
        <taxon>Muroidea</taxon>
        <taxon>Muridae</taxon>
        <taxon>Murinae</taxon>
        <taxon>Mus</taxon>
        <taxon>Mus</taxon>
    </lineage>
</organism>
<proteinExistence type="evidence at transcript level"/>
<keyword id="KW-0025">Alternative splicing</keyword>
<keyword id="KW-0963">Cytoplasm</keyword>
<keyword id="KW-0433">Leucine-rich repeat</keyword>
<keyword id="KW-1185">Reference proteome</keyword>
<keyword id="KW-0677">Repeat</keyword>
<feature type="chain" id="PRO_0000225501" description="Leucine-rich repeat-containing protein 51">
    <location>
        <begin position="1"/>
        <end position="192"/>
    </location>
</feature>
<feature type="repeat" description="LRR 1">
    <location>
        <begin position="49"/>
        <end position="71"/>
    </location>
</feature>
<feature type="repeat" description="LRR 2">
    <location>
        <begin position="80"/>
        <end position="101"/>
    </location>
</feature>
<feature type="repeat" description="LRR 3">
    <location>
        <begin position="103"/>
        <end position="124"/>
    </location>
</feature>
<feature type="domain" description="LRRCT">
    <location>
        <begin position="137"/>
        <end position="175"/>
    </location>
</feature>
<feature type="splice variant" id="VSP_036897" description="In isoform 2." evidence="2 3">
    <location>
        <begin position="147"/>
        <end position="192"/>
    </location>
</feature>
<protein>
    <recommendedName>
        <fullName evidence="4">Leucine-rich repeat-containing protein 51</fullName>
    </recommendedName>
</protein>
<dbReference type="EMBL" id="EU627089">
    <property type="protein sequence ID" value="ACF40899.1"/>
    <property type="molecule type" value="mRNA"/>
</dbReference>
<dbReference type="EMBL" id="EU627090">
    <property type="protein sequence ID" value="ACF40900.1"/>
    <property type="molecule type" value="mRNA"/>
</dbReference>
<dbReference type="EMBL" id="AK005758">
    <property type="protein sequence ID" value="BAB24223.1"/>
    <property type="molecule type" value="mRNA"/>
</dbReference>
<dbReference type="EMBL" id="CH466531">
    <property type="protein sequence ID" value="EDL16549.1"/>
    <property type="molecule type" value="Genomic_DNA"/>
</dbReference>
<dbReference type="EMBL" id="CH466531">
    <property type="protein sequence ID" value="EDL16550.1"/>
    <property type="molecule type" value="Genomic_DNA"/>
</dbReference>
<dbReference type="EMBL" id="CH466531">
    <property type="protein sequence ID" value="EDL16551.1"/>
    <property type="molecule type" value="Genomic_DNA"/>
</dbReference>
<dbReference type="EMBL" id="BC025128">
    <property type="protein sequence ID" value="AAH25128.1"/>
    <property type="molecule type" value="mRNA"/>
</dbReference>
<dbReference type="CCDS" id="CCDS52331.1">
    <molecule id="Q9DAK8-2"/>
</dbReference>
<dbReference type="CCDS" id="CCDS52332.1">
    <molecule id="Q9DAK8-1"/>
</dbReference>
<dbReference type="RefSeq" id="NP_001156446.1">
    <molecule id="Q9DAK8-2"/>
    <property type="nucleotide sequence ID" value="NM_001162974.3"/>
</dbReference>
<dbReference type="RefSeq" id="NP_081329.1">
    <property type="nucleotide sequence ID" value="NM_027053.1"/>
</dbReference>
<dbReference type="RefSeq" id="XP_030098830.1">
    <molecule id="Q9DAK8-2"/>
    <property type="nucleotide sequence ID" value="XM_030242970.1"/>
</dbReference>
<dbReference type="SMR" id="Q9DAK8"/>
<dbReference type="FunCoup" id="Q9DAK8">
    <property type="interactions" value="5"/>
</dbReference>
<dbReference type="STRING" id="10090.ENSMUSP00000077543"/>
<dbReference type="PhosphoSitePlus" id="Q9DAK8"/>
<dbReference type="PaxDb" id="10090-ENSMUSP00000077543"/>
<dbReference type="ProteomicsDB" id="252507">
    <molecule id="Q9DAK8-1"/>
</dbReference>
<dbReference type="ProteomicsDB" id="252508">
    <molecule id="Q9DAK8-2"/>
</dbReference>
<dbReference type="Antibodypedia" id="34978">
    <property type="antibodies" value="54 antibodies from 16 providers"/>
</dbReference>
<dbReference type="DNASU" id="69358"/>
<dbReference type="Ensembl" id="ENSMUST00000098236.9">
    <molecule id="Q9DAK8-2"/>
    <property type="protein sequence ID" value="ENSMUSP00000095838.3"/>
    <property type="gene ID" value="ENSMUSG00000064307.14"/>
</dbReference>
<dbReference type="Ensembl" id="ENSMUST00000106963.2">
    <molecule id="Q9DAK8-2"/>
    <property type="protein sequence ID" value="ENSMUSP00000102576.2"/>
    <property type="gene ID" value="ENSMUSG00000064307.14"/>
</dbReference>
<dbReference type="Ensembl" id="ENSMUST00000106964.8">
    <molecule id="Q9DAK8-2"/>
    <property type="protein sequence ID" value="ENSMUSP00000102577.2"/>
    <property type="gene ID" value="ENSMUSG00000064307.14"/>
</dbReference>
<dbReference type="Ensembl" id="ENSMUST00000163903.8">
    <molecule id="Q9DAK8-2"/>
    <property type="protein sequence ID" value="ENSMUSP00000129333.2"/>
    <property type="gene ID" value="ENSMUSG00000064307.14"/>
</dbReference>
<dbReference type="GeneID" id="69358"/>
<dbReference type="KEGG" id="mmu:69358"/>
<dbReference type="UCSC" id="uc009ipx.2">
    <molecule id="Q9DAK8-1"/>
    <property type="organism name" value="mouse"/>
</dbReference>
<dbReference type="AGR" id="MGI:1916608"/>
<dbReference type="CTD" id="120356739"/>
<dbReference type="MGI" id="MGI:1916608">
    <property type="gene designation" value="Lrrc51"/>
</dbReference>
<dbReference type="VEuPathDB" id="HostDB:ENSMUSG00000064307"/>
<dbReference type="eggNOG" id="KOG1644">
    <property type="taxonomic scope" value="Eukaryota"/>
</dbReference>
<dbReference type="GeneTree" id="ENSGT00510000047925"/>
<dbReference type="HOGENOM" id="CLU_095080_1_1_1"/>
<dbReference type="InParanoid" id="Q9DAK8"/>
<dbReference type="OMA" id="LWHQSNS"/>
<dbReference type="OrthoDB" id="676979at2759"/>
<dbReference type="PhylomeDB" id="Q9DAK8"/>
<dbReference type="BioGRID-ORCS" id="69358">
    <property type="hits" value="3 hits in 77 CRISPR screens"/>
</dbReference>
<dbReference type="ChiTaRS" id="Lrrc51">
    <property type="organism name" value="mouse"/>
</dbReference>
<dbReference type="PRO" id="PR:Q9DAK8"/>
<dbReference type="Proteomes" id="UP000000589">
    <property type="component" value="Chromosome 7"/>
</dbReference>
<dbReference type="RNAct" id="Q9DAK8">
    <property type="molecule type" value="protein"/>
</dbReference>
<dbReference type="Bgee" id="ENSMUSG00000064307">
    <property type="expression patterns" value="Expressed in seminiferous tubule of testis and 149 other cell types or tissues"/>
</dbReference>
<dbReference type="ExpressionAtlas" id="Q9DAK8">
    <property type="expression patterns" value="baseline and differential"/>
</dbReference>
<dbReference type="GO" id="GO:0005737">
    <property type="term" value="C:cytoplasm"/>
    <property type="evidence" value="ECO:0007669"/>
    <property type="project" value="UniProtKB-SubCell"/>
</dbReference>
<dbReference type="Gene3D" id="3.80.10.10">
    <property type="entry name" value="Ribonuclease Inhibitor"/>
    <property type="match status" value="1"/>
</dbReference>
<dbReference type="InterPro" id="IPR001611">
    <property type="entry name" value="Leu-rich_rpt"/>
</dbReference>
<dbReference type="InterPro" id="IPR032675">
    <property type="entry name" value="LRR_dom_sf"/>
</dbReference>
<dbReference type="PANTHER" id="PTHR46545">
    <property type="entry name" value="LEUCINE-RICH REPEAT-CONTAINING PROTEIN 51"/>
    <property type="match status" value="1"/>
</dbReference>
<dbReference type="PANTHER" id="PTHR46545:SF1">
    <property type="entry name" value="LEUCINE-RICH REPEAT-CONTAINING PROTEIN 51"/>
    <property type="match status" value="1"/>
</dbReference>
<dbReference type="Pfam" id="PF14580">
    <property type="entry name" value="LRR_9"/>
    <property type="match status" value="1"/>
</dbReference>
<dbReference type="SUPFAM" id="SSF52075">
    <property type="entry name" value="Outer arm dynein light chain 1"/>
    <property type="match status" value="1"/>
</dbReference>
<dbReference type="PROSITE" id="PS51450">
    <property type="entry name" value="LRR"/>
    <property type="match status" value="4"/>
</dbReference>
<comment type="subcellular location">
    <subcellularLocation>
        <location evidence="1">Cytoplasm</location>
    </subcellularLocation>
</comment>
<comment type="alternative products">
    <event type="alternative splicing"/>
    <isoform>
        <id>Q9DAK8-1</id>
        <name>1</name>
        <name>A</name>
        <sequence type="displayed"/>
    </isoform>
    <isoform>
        <id>Q9DAK8-2</id>
        <name>2</name>
        <name>B</name>
        <sequence type="described" ref="VSP_036897"/>
    </isoform>
</comment>
<comment type="tissue specificity">
    <text evidence="1">Widely expressed in adult and embryonic tissues. Expressed in the developing choroid plexus from 12.5 dpc and in the epithelium of the developing airway tract from 14.5 dpc. Also expressed in the postnatal inner ear.</text>
</comment>
<accession>Q9DAK8</accession>
<accession>B6CZ58</accession>
<accession>B6CZ59</accession>
<accession>Q8R171</accession>
<evidence type="ECO:0000269" key="1">
    <source>
    </source>
</evidence>
<evidence type="ECO:0000303" key="2">
    <source>
    </source>
</evidence>
<evidence type="ECO:0000303" key="3">
    <source>
    </source>
</evidence>
<evidence type="ECO:0000305" key="4"/>
<evidence type="ECO:0000312" key="5">
    <source>
        <dbReference type="MGI" id="MGI:1916608"/>
    </source>
</evidence>